<feature type="chain" id="PRO_1000055643" description="Large ribosomal subunit protein uL14">
    <location>
        <begin position="1"/>
        <end position="122"/>
    </location>
</feature>
<keyword id="KW-0687">Ribonucleoprotein</keyword>
<keyword id="KW-0689">Ribosomal protein</keyword>
<keyword id="KW-0694">RNA-binding</keyword>
<keyword id="KW-0699">rRNA-binding</keyword>
<organism>
    <name type="scientific">Mycobacterium sp. (strain KMS)</name>
    <dbReference type="NCBI Taxonomy" id="189918"/>
    <lineage>
        <taxon>Bacteria</taxon>
        <taxon>Bacillati</taxon>
        <taxon>Actinomycetota</taxon>
        <taxon>Actinomycetes</taxon>
        <taxon>Mycobacteriales</taxon>
        <taxon>Mycobacteriaceae</taxon>
        <taxon>Mycobacterium</taxon>
    </lineage>
</organism>
<dbReference type="EMBL" id="CP000518">
    <property type="protein sequence ID" value="ABL90256.1"/>
    <property type="molecule type" value="Genomic_DNA"/>
</dbReference>
<dbReference type="SMR" id="A1UBP8"/>
<dbReference type="STRING" id="189918.Mkms_1042"/>
<dbReference type="KEGG" id="mkm:Mkms_1042"/>
<dbReference type="HOGENOM" id="CLU_095071_2_1_11"/>
<dbReference type="OrthoDB" id="9806379at2"/>
<dbReference type="GO" id="GO:0022625">
    <property type="term" value="C:cytosolic large ribosomal subunit"/>
    <property type="evidence" value="ECO:0007669"/>
    <property type="project" value="TreeGrafter"/>
</dbReference>
<dbReference type="GO" id="GO:0070180">
    <property type="term" value="F:large ribosomal subunit rRNA binding"/>
    <property type="evidence" value="ECO:0007669"/>
    <property type="project" value="TreeGrafter"/>
</dbReference>
<dbReference type="GO" id="GO:0003735">
    <property type="term" value="F:structural constituent of ribosome"/>
    <property type="evidence" value="ECO:0007669"/>
    <property type="project" value="InterPro"/>
</dbReference>
<dbReference type="GO" id="GO:0006412">
    <property type="term" value="P:translation"/>
    <property type="evidence" value="ECO:0007669"/>
    <property type="project" value="UniProtKB-UniRule"/>
</dbReference>
<dbReference type="CDD" id="cd00337">
    <property type="entry name" value="Ribosomal_uL14"/>
    <property type="match status" value="1"/>
</dbReference>
<dbReference type="FunFam" id="2.40.150.20:FF:000001">
    <property type="entry name" value="50S ribosomal protein L14"/>
    <property type="match status" value="1"/>
</dbReference>
<dbReference type="Gene3D" id="2.40.150.20">
    <property type="entry name" value="Ribosomal protein L14"/>
    <property type="match status" value="1"/>
</dbReference>
<dbReference type="HAMAP" id="MF_01367">
    <property type="entry name" value="Ribosomal_uL14"/>
    <property type="match status" value="1"/>
</dbReference>
<dbReference type="InterPro" id="IPR000218">
    <property type="entry name" value="Ribosomal_uL14"/>
</dbReference>
<dbReference type="InterPro" id="IPR005745">
    <property type="entry name" value="Ribosomal_uL14_bac-type"/>
</dbReference>
<dbReference type="InterPro" id="IPR019972">
    <property type="entry name" value="Ribosomal_uL14_CS"/>
</dbReference>
<dbReference type="InterPro" id="IPR036853">
    <property type="entry name" value="Ribosomal_uL14_sf"/>
</dbReference>
<dbReference type="NCBIfam" id="TIGR01067">
    <property type="entry name" value="rplN_bact"/>
    <property type="match status" value="1"/>
</dbReference>
<dbReference type="PANTHER" id="PTHR11761">
    <property type="entry name" value="50S/60S RIBOSOMAL PROTEIN L14/L23"/>
    <property type="match status" value="1"/>
</dbReference>
<dbReference type="PANTHER" id="PTHR11761:SF3">
    <property type="entry name" value="LARGE RIBOSOMAL SUBUNIT PROTEIN UL14M"/>
    <property type="match status" value="1"/>
</dbReference>
<dbReference type="Pfam" id="PF00238">
    <property type="entry name" value="Ribosomal_L14"/>
    <property type="match status" value="1"/>
</dbReference>
<dbReference type="SMART" id="SM01374">
    <property type="entry name" value="Ribosomal_L14"/>
    <property type="match status" value="1"/>
</dbReference>
<dbReference type="SUPFAM" id="SSF50193">
    <property type="entry name" value="Ribosomal protein L14"/>
    <property type="match status" value="1"/>
</dbReference>
<dbReference type="PROSITE" id="PS00049">
    <property type="entry name" value="RIBOSOMAL_L14"/>
    <property type="match status" value="1"/>
</dbReference>
<proteinExistence type="inferred from homology"/>
<evidence type="ECO:0000255" key="1">
    <source>
        <dbReference type="HAMAP-Rule" id="MF_01367"/>
    </source>
</evidence>
<evidence type="ECO:0000305" key="2"/>
<sequence length="122" mass="13433">MIQQESRLKVADNTGAKEILCIRVLGGSSRRYAGIGDVIVATVKEAIPGANVKRGDVVKAVVVRTVKERRRADGSYIKFDENAAVIIKNDNDPRGTRIFGPVGRELREKRFMKIVSLAPEVL</sequence>
<reference key="1">
    <citation type="submission" date="2006-12" db="EMBL/GenBank/DDBJ databases">
        <title>Complete sequence of chromosome of Mycobacterium sp. KMS.</title>
        <authorList>
            <consortium name="US DOE Joint Genome Institute"/>
            <person name="Copeland A."/>
            <person name="Lucas S."/>
            <person name="Lapidus A."/>
            <person name="Barry K."/>
            <person name="Detter J.C."/>
            <person name="Glavina del Rio T."/>
            <person name="Hammon N."/>
            <person name="Israni S."/>
            <person name="Dalin E."/>
            <person name="Tice H."/>
            <person name="Pitluck S."/>
            <person name="Kiss H."/>
            <person name="Brettin T."/>
            <person name="Bruce D."/>
            <person name="Han C."/>
            <person name="Tapia R."/>
            <person name="Gilna P."/>
            <person name="Schmutz J."/>
            <person name="Larimer F."/>
            <person name="Land M."/>
            <person name="Hauser L."/>
            <person name="Kyrpides N."/>
            <person name="Mikhailova N."/>
            <person name="Miller C.D."/>
            <person name="Richardson P."/>
        </authorList>
    </citation>
    <scope>NUCLEOTIDE SEQUENCE [LARGE SCALE GENOMIC DNA]</scope>
    <source>
        <strain>KMS</strain>
    </source>
</reference>
<protein>
    <recommendedName>
        <fullName evidence="1">Large ribosomal subunit protein uL14</fullName>
    </recommendedName>
    <alternativeName>
        <fullName evidence="2">50S ribosomal protein L14</fullName>
    </alternativeName>
</protein>
<comment type="function">
    <text evidence="1">Binds to 23S rRNA. Forms part of two intersubunit bridges in the 70S ribosome.</text>
</comment>
<comment type="subunit">
    <text evidence="1">Part of the 50S ribosomal subunit. Forms a cluster with proteins L3 and L19. In the 70S ribosome, L14 and L19 interact and together make contacts with the 16S rRNA in bridges B5 and B8.</text>
</comment>
<comment type="similarity">
    <text evidence="1">Belongs to the universal ribosomal protein uL14 family.</text>
</comment>
<gene>
    <name evidence="1" type="primary">rplN</name>
    <name type="ordered locus">Mkms_1042</name>
</gene>
<accession>A1UBP8</accession>
<name>RL14_MYCSK</name>